<evidence type="ECO:0000255" key="1">
    <source>
        <dbReference type="HAMAP-Rule" id="MF_00016"/>
    </source>
</evidence>
<organism>
    <name type="scientific">Syntrophotalea carbinolica (strain DSM 2380 / NBRC 103641 / GraBd1)</name>
    <name type="common">Pelobacter carbinolicus</name>
    <dbReference type="NCBI Taxonomy" id="338963"/>
    <lineage>
        <taxon>Bacteria</taxon>
        <taxon>Pseudomonadati</taxon>
        <taxon>Thermodesulfobacteriota</taxon>
        <taxon>Desulfuromonadia</taxon>
        <taxon>Desulfuromonadales</taxon>
        <taxon>Syntrophotaleaceae</taxon>
        <taxon>Syntrophotalea</taxon>
    </lineage>
</organism>
<reference key="1">
    <citation type="submission" date="2005-10" db="EMBL/GenBank/DDBJ databases">
        <title>Complete sequence of Pelobacter carbinolicus DSM 2380.</title>
        <authorList>
            <person name="Copeland A."/>
            <person name="Lucas S."/>
            <person name="Lapidus A."/>
            <person name="Barry K."/>
            <person name="Detter J.C."/>
            <person name="Glavina T."/>
            <person name="Hammon N."/>
            <person name="Israni S."/>
            <person name="Pitluck S."/>
            <person name="Chertkov O."/>
            <person name="Schmutz J."/>
            <person name="Larimer F."/>
            <person name="Land M."/>
            <person name="Kyrpides N."/>
            <person name="Ivanova N."/>
            <person name="Richardson P."/>
        </authorList>
    </citation>
    <scope>NUCLEOTIDE SEQUENCE [LARGE SCALE GENOMIC DNA]</scope>
    <source>
        <strain>DSM 2380 / NBRC 103641 / GraBd1</strain>
    </source>
</reference>
<sequence>MTERFVTPDFSSEEDRLEASLRPRVLTEYIGQSKAKGNLQVFIDAARGRQESLDHVLFYGPPGLGKTTLANIVASEMGVSIKSTSGPVIEKPGDLAAILTNLSDGDVLFIDEIHRLSPVVEEILYPAMEDYQLDIIIGQGPSARTIKLDIPRFTLVGATTRAGLLSSPLRDRFGVICRLEFYTDDELATIAGRSARILDIPIEKDGQYEIARRSRGTPRIANRLLRRVRDFAQVKGDGIITRDIADMALSRLEVDNCGLDHMDRLLLLAIIDKFAGGPVGLETLAAAVGEEKDTIEDVIEPYLLQNGFLNRTPRGRTATERAYRHFQRQIPRGKTSGELFS</sequence>
<feature type="chain" id="PRO_0000235386" description="Holliday junction branch migration complex subunit RuvB">
    <location>
        <begin position="1"/>
        <end position="341"/>
    </location>
</feature>
<feature type="region of interest" description="Large ATPase domain (RuvB-L)" evidence="1">
    <location>
        <begin position="1"/>
        <end position="182"/>
    </location>
</feature>
<feature type="region of interest" description="Small ATPAse domain (RuvB-S)" evidence="1">
    <location>
        <begin position="183"/>
        <end position="253"/>
    </location>
</feature>
<feature type="region of interest" description="Head domain (RuvB-H)" evidence="1">
    <location>
        <begin position="256"/>
        <end position="341"/>
    </location>
</feature>
<feature type="binding site" evidence="1">
    <location>
        <position position="21"/>
    </location>
    <ligand>
        <name>ATP</name>
        <dbReference type="ChEBI" id="CHEBI:30616"/>
    </ligand>
</feature>
<feature type="binding site" evidence="1">
    <location>
        <position position="22"/>
    </location>
    <ligand>
        <name>ATP</name>
        <dbReference type="ChEBI" id="CHEBI:30616"/>
    </ligand>
</feature>
<feature type="binding site" evidence="1">
    <location>
        <position position="63"/>
    </location>
    <ligand>
        <name>ATP</name>
        <dbReference type="ChEBI" id="CHEBI:30616"/>
    </ligand>
</feature>
<feature type="binding site" evidence="1">
    <location>
        <position position="66"/>
    </location>
    <ligand>
        <name>ATP</name>
        <dbReference type="ChEBI" id="CHEBI:30616"/>
    </ligand>
</feature>
<feature type="binding site" evidence="1">
    <location>
        <position position="67"/>
    </location>
    <ligand>
        <name>ATP</name>
        <dbReference type="ChEBI" id="CHEBI:30616"/>
    </ligand>
</feature>
<feature type="binding site" evidence="1">
    <location>
        <position position="67"/>
    </location>
    <ligand>
        <name>Mg(2+)</name>
        <dbReference type="ChEBI" id="CHEBI:18420"/>
    </ligand>
</feature>
<feature type="binding site" evidence="1">
    <location>
        <position position="68"/>
    </location>
    <ligand>
        <name>ATP</name>
        <dbReference type="ChEBI" id="CHEBI:30616"/>
    </ligand>
</feature>
<feature type="binding site" evidence="1">
    <location>
        <begin position="129"/>
        <end position="131"/>
    </location>
    <ligand>
        <name>ATP</name>
        <dbReference type="ChEBI" id="CHEBI:30616"/>
    </ligand>
</feature>
<feature type="binding site" evidence="1">
    <location>
        <position position="172"/>
    </location>
    <ligand>
        <name>ATP</name>
        <dbReference type="ChEBI" id="CHEBI:30616"/>
    </ligand>
</feature>
<feature type="binding site" evidence="1">
    <location>
        <position position="182"/>
    </location>
    <ligand>
        <name>ATP</name>
        <dbReference type="ChEBI" id="CHEBI:30616"/>
    </ligand>
</feature>
<feature type="binding site" evidence="1">
    <location>
        <position position="219"/>
    </location>
    <ligand>
        <name>ATP</name>
        <dbReference type="ChEBI" id="CHEBI:30616"/>
    </ligand>
</feature>
<feature type="binding site" evidence="1">
    <location>
        <position position="311"/>
    </location>
    <ligand>
        <name>DNA</name>
        <dbReference type="ChEBI" id="CHEBI:16991"/>
    </ligand>
</feature>
<feature type="binding site" evidence="1">
    <location>
        <position position="316"/>
    </location>
    <ligand>
        <name>DNA</name>
        <dbReference type="ChEBI" id="CHEBI:16991"/>
    </ligand>
</feature>
<keyword id="KW-0067">ATP-binding</keyword>
<keyword id="KW-0963">Cytoplasm</keyword>
<keyword id="KW-0227">DNA damage</keyword>
<keyword id="KW-0233">DNA recombination</keyword>
<keyword id="KW-0234">DNA repair</keyword>
<keyword id="KW-0238">DNA-binding</keyword>
<keyword id="KW-0378">Hydrolase</keyword>
<keyword id="KW-0547">Nucleotide-binding</keyword>
<keyword id="KW-1185">Reference proteome</keyword>
<protein>
    <recommendedName>
        <fullName evidence="1">Holliday junction branch migration complex subunit RuvB</fullName>
        <ecNumber evidence="1">3.6.4.-</ecNumber>
    </recommendedName>
</protein>
<proteinExistence type="inferred from homology"/>
<name>RUVB_SYNC1</name>
<gene>
    <name evidence="1" type="primary">ruvB</name>
    <name type="ordered locus">Pcar_2338</name>
</gene>
<accession>Q3A230</accession>
<dbReference type="EC" id="3.6.4.-" evidence="1"/>
<dbReference type="EMBL" id="CP000142">
    <property type="protein sequence ID" value="ABA89577.1"/>
    <property type="molecule type" value="Genomic_DNA"/>
</dbReference>
<dbReference type="RefSeq" id="WP_011342099.1">
    <property type="nucleotide sequence ID" value="NC_007498.2"/>
</dbReference>
<dbReference type="SMR" id="Q3A230"/>
<dbReference type="STRING" id="338963.Pcar_2338"/>
<dbReference type="KEGG" id="pca:Pcar_2338"/>
<dbReference type="eggNOG" id="COG2255">
    <property type="taxonomic scope" value="Bacteria"/>
</dbReference>
<dbReference type="HOGENOM" id="CLU_055599_1_0_7"/>
<dbReference type="OrthoDB" id="9804478at2"/>
<dbReference type="Proteomes" id="UP000002534">
    <property type="component" value="Chromosome"/>
</dbReference>
<dbReference type="GO" id="GO:0005737">
    <property type="term" value="C:cytoplasm"/>
    <property type="evidence" value="ECO:0007669"/>
    <property type="project" value="UniProtKB-SubCell"/>
</dbReference>
<dbReference type="GO" id="GO:0048476">
    <property type="term" value="C:Holliday junction resolvase complex"/>
    <property type="evidence" value="ECO:0007669"/>
    <property type="project" value="UniProtKB-UniRule"/>
</dbReference>
<dbReference type="GO" id="GO:0005524">
    <property type="term" value="F:ATP binding"/>
    <property type="evidence" value="ECO:0007669"/>
    <property type="project" value="UniProtKB-UniRule"/>
</dbReference>
<dbReference type="GO" id="GO:0016887">
    <property type="term" value="F:ATP hydrolysis activity"/>
    <property type="evidence" value="ECO:0007669"/>
    <property type="project" value="InterPro"/>
</dbReference>
<dbReference type="GO" id="GO:0000400">
    <property type="term" value="F:four-way junction DNA binding"/>
    <property type="evidence" value="ECO:0007669"/>
    <property type="project" value="UniProtKB-UniRule"/>
</dbReference>
<dbReference type="GO" id="GO:0009378">
    <property type="term" value="F:four-way junction helicase activity"/>
    <property type="evidence" value="ECO:0007669"/>
    <property type="project" value="InterPro"/>
</dbReference>
<dbReference type="GO" id="GO:0006310">
    <property type="term" value="P:DNA recombination"/>
    <property type="evidence" value="ECO:0007669"/>
    <property type="project" value="UniProtKB-UniRule"/>
</dbReference>
<dbReference type="GO" id="GO:0006281">
    <property type="term" value="P:DNA repair"/>
    <property type="evidence" value="ECO:0007669"/>
    <property type="project" value="UniProtKB-UniRule"/>
</dbReference>
<dbReference type="CDD" id="cd00009">
    <property type="entry name" value="AAA"/>
    <property type="match status" value="1"/>
</dbReference>
<dbReference type="FunFam" id="1.10.10.10:FF:000086">
    <property type="entry name" value="Holliday junction ATP-dependent DNA helicase RuvB"/>
    <property type="match status" value="1"/>
</dbReference>
<dbReference type="FunFam" id="3.40.50.300:FF:000073">
    <property type="entry name" value="Holliday junction ATP-dependent DNA helicase RuvB"/>
    <property type="match status" value="1"/>
</dbReference>
<dbReference type="Gene3D" id="1.10.8.60">
    <property type="match status" value="1"/>
</dbReference>
<dbReference type="Gene3D" id="3.40.50.300">
    <property type="entry name" value="P-loop containing nucleotide triphosphate hydrolases"/>
    <property type="match status" value="1"/>
</dbReference>
<dbReference type="Gene3D" id="1.10.10.10">
    <property type="entry name" value="Winged helix-like DNA-binding domain superfamily/Winged helix DNA-binding domain"/>
    <property type="match status" value="1"/>
</dbReference>
<dbReference type="HAMAP" id="MF_00016">
    <property type="entry name" value="DNA_HJ_migration_RuvB"/>
    <property type="match status" value="1"/>
</dbReference>
<dbReference type="InterPro" id="IPR003593">
    <property type="entry name" value="AAA+_ATPase"/>
</dbReference>
<dbReference type="InterPro" id="IPR041445">
    <property type="entry name" value="AAA_lid_4"/>
</dbReference>
<dbReference type="InterPro" id="IPR004605">
    <property type="entry name" value="DNA_helicase_Holl-junc_RuvB"/>
</dbReference>
<dbReference type="InterPro" id="IPR027417">
    <property type="entry name" value="P-loop_NTPase"/>
</dbReference>
<dbReference type="InterPro" id="IPR008824">
    <property type="entry name" value="RuvB-like_N"/>
</dbReference>
<dbReference type="InterPro" id="IPR008823">
    <property type="entry name" value="RuvB_C"/>
</dbReference>
<dbReference type="InterPro" id="IPR036388">
    <property type="entry name" value="WH-like_DNA-bd_sf"/>
</dbReference>
<dbReference type="InterPro" id="IPR036390">
    <property type="entry name" value="WH_DNA-bd_sf"/>
</dbReference>
<dbReference type="NCBIfam" id="NF000868">
    <property type="entry name" value="PRK00080.1"/>
    <property type="match status" value="1"/>
</dbReference>
<dbReference type="NCBIfam" id="TIGR00635">
    <property type="entry name" value="ruvB"/>
    <property type="match status" value="1"/>
</dbReference>
<dbReference type="PANTHER" id="PTHR42848">
    <property type="match status" value="1"/>
</dbReference>
<dbReference type="PANTHER" id="PTHR42848:SF1">
    <property type="entry name" value="HOLLIDAY JUNCTION BRANCH MIGRATION COMPLEX SUBUNIT RUVB"/>
    <property type="match status" value="1"/>
</dbReference>
<dbReference type="Pfam" id="PF17864">
    <property type="entry name" value="AAA_lid_4"/>
    <property type="match status" value="1"/>
</dbReference>
<dbReference type="Pfam" id="PF05491">
    <property type="entry name" value="RuvB_C"/>
    <property type="match status" value="1"/>
</dbReference>
<dbReference type="Pfam" id="PF05496">
    <property type="entry name" value="RuvB_N"/>
    <property type="match status" value="1"/>
</dbReference>
<dbReference type="SMART" id="SM00382">
    <property type="entry name" value="AAA"/>
    <property type="match status" value="1"/>
</dbReference>
<dbReference type="SUPFAM" id="SSF52540">
    <property type="entry name" value="P-loop containing nucleoside triphosphate hydrolases"/>
    <property type="match status" value="1"/>
</dbReference>
<dbReference type="SUPFAM" id="SSF46785">
    <property type="entry name" value="Winged helix' DNA-binding domain"/>
    <property type="match status" value="1"/>
</dbReference>
<comment type="function">
    <text evidence="1">The RuvA-RuvB-RuvC complex processes Holliday junction (HJ) DNA during genetic recombination and DNA repair, while the RuvA-RuvB complex plays an important role in the rescue of blocked DNA replication forks via replication fork reversal (RFR). RuvA specifically binds to HJ cruciform DNA, conferring on it an open structure. The RuvB hexamer acts as an ATP-dependent pump, pulling dsDNA into and through the RuvAB complex. RuvB forms 2 homohexamers on either side of HJ DNA bound by 1 or 2 RuvA tetramers; 4 subunits per hexamer contact DNA at a time. Coordinated motions by a converter formed by DNA-disengaged RuvB subunits stimulates ATP hydrolysis and nucleotide exchange. Immobilization of the converter enables RuvB to convert the ATP-contained energy into a lever motion, pulling 2 nucleotides of DNA out of the RuvA tetramer per ATP hydrolyzed, thus driving DNA branch migration. The RuvB motors rotate together with the DNA substrate, which together with the progressing nucleotide cycle form the mechanistic basis for DNA recombination by continuous HJ branch migration. Branch migration allows RuvC to scan DNA until it finds its consensus sequence, where it cleaves and resolves cruciform DNA.</text>
</comment>
<comment type="catalytic activity">
    <reaction evidence="1">
        <text>ATP + H2O = ADP + phosphate + H(+)</text>
        <dbReference type="Rhea" id="RHEA:13065"/>
        <dbReference type="ChEBI" id="CHEBI:15377"/>
        <dbReference type="ChEBI" id="CHEBI:15378"/>
        <dbReference type="ChEBI" id="CHEBI:30616"/>
        <dbReference type="ChEBI" id="CHEBI:43474"/>
        <dbReference type="ChEBI" id="CHEBI:456216"/>
    </reaction>
</comment>
<comment type="subunit">
    <text evidence="1">Homohexamer. Forms an RuvA(8)-RuvB(12)-Holliday junction (HJ) complex. HJ DNA is sandwiched between 2 RuvA tetramers; dsDNA enters through RuvA and exits via RuvB. An RuvB hexamer assembles on each DNA strand where it exits the tetramer. Each RuvB hexamer is contacted by two RuvA subunits (via domain III) on 2 adjacent RuvB subunits; this complex drives branch migration. In the full resolvosome a probable DNA-RuvA(4)-RuvB(12)-RuvC(2) complex forms which resolves the HJ.</text>
</comment>
<comment type="subcellular location">
    <subcellularLocation>
        <location evidence="1">Cytoplasm</location>
    </subcellularLocation>
</comment>
<comment type="domain">
    <text evidence="1">Has 3 domains, the large (RuvB-L) and small ATPase (RuvB-S) domains and the C-terminal head (RuvB-H) domain. The head domain binds DNA, while the ATPase domains jointly bind ATP, ADP or are empty depending on the state of the subunit in the translocation cycle. During a single DNA translocation step the structure of each domain remains the same, but their relative positions change.</text>
</comment>
<comment type="similarity">
    <text evidence="1">Belongs to the RuvB family.</text>
</comment>